<sequence>MKFLLNSIPTISFFIFYKFYDIFIASFSLMIASLFTFIITSILFNSINKHDLINLIFVIVFGFLTLFYHNSSYIKWKVTIIYFLISIVFLINYLFIKNNLLNIIFKNTIQLSKNVWRKLSLFWSIFFLICAVSNTYIILYFSEQTWVTFKIFGLTILTLIAVIINGFYIYFLKSKIIQ</sequence>
<protein>
    <recommendedName>
        <fullName evidence="1">Membrane-spanning protein YciB</fullName>
    </recommendedName>
</protein>
<accession>Q89AL3</accession>
<proteinExistence type="inferred from homology"/>
<name>YCIB_BUCBP</name>
<dbReference type="EMBL" id="AE016826">
    <property type="protein sequence ID" value="AAO26982.1"/>
    <property type="molecule type" value="Genomic_DNA"/>
</dbReference>
<dbReference type="RefSeq" id="WP_011091383.1">
    <property type="nucleotide sequence ID" value="NC_004545.1"/>
</dbReference>
<dbReference type="STRING" id="224915.bbp_255"/>
<dbReference type="KEGG" id="bab:bbp_255"/>
<dbReference type="eggNOG" id="COG2917">
    <property type="taxonomic scope" value="Bacteria"/>
</dbReference>
<dbReference type="HOGENOM" id="CLU_089554_2_0_6"/>
<dbReference type="OrthoDB" id="9788219at2"/>
<dbReference type="Proteomes" id="UP000000601">
    <property type="component" value="Chromosome"/>
</dbReference>
<dbReference type="GO" id="GO:0005886">
    <property type="term" value="C:plasma membrane"/>
    <property type="evidence" value="ECO:0007669"/>
    <property type="project" value="UniProtKB-SubCell"/>
</dbReference>
<dbReference type="HAMAP" id="MF_00189">
    <property type="entry name" value="YciB"/>
    <property type="match status" value="1"/>
</dbReference>
<dbReference type="InterPro" id="IPR006008">
    <property type="entry name" value="YciB"/>
</dbReference>
<dbReference type="PANTHER" id="PTHR36917:SF1">
    <property type="entry name" value="INNER MEMBRANE-SPANNING PROTEIN YCIB"/>
    <property type="match status" value="1"/>
</dbReference>
<dbReference type="PANTHER" id="PTHR36917">
    <property type="entry name" value="INTRACELLULAR SEPTATION PROTEIN A-RELATED"/>
    <property type="match status" value="1"/>
</dbReference>
<dbReference type="Pfam" id="PF04279">
    <property type="entry name" value="IspA"/>
    <property type="match status" value="1"/>
</dbReference>
<keyword id="KW-1003">Cell membrane</keyword>
<keyword id="KW-0472">Membrane</keyword>
<keyword id="KW-1185">Reference proteome</keyword>
<keyword id="KW-0812">Transmembrane</keyword>
<keyword id="KW-1133">Transmembrane helix</keyword>
<evidence type="ECO:0000255" key="1">
    <source>
        <dbReference type="HAMAP-Rule" id="MF_00189"/>
    </source>
</evidence>
<organism>
    <name type="scientific">Buchnera aphidicola subsp. Baizongia pistaciae (strain Bp)</name>
    <dbReference type="NCBI Taxonomy" id="224915"/>
    <lineage>
        <taxon>Bacteria</taxon>
        <taxon>Pseudomonadati</taxon>
        <taxon>Pseudomonadota</taxon>
        <taxon>Gammaproteobacteria</taxon>
        <taxon>Enterobacterales</taxon>
        <taxon>Erwiniaceae</taxon>
        <taxon>Buchnera</taxon>
    </lineage>
</organism>
<feature type="chain" id="PRO_0000206529" description="Membrane-spanning protein YciB">
    <location>
        <begin position="1"/>
        <end position="178"/>
    </location>
</feature>
<feature type="transmembrane region" description="Helical" evidence="1">
    <location>
        <begin position="22"/>
        <end position="42"/>
    </location>
</feature>
<feature type="transmembrane region" description="Helical" evidence="1">
    <location>
        <begin position="52"/>
        <end position="72"/>
    </location>
</feature>
<feature type="transmembrane region" description="Helical" evidence="1">
    <location>
        <begin position="76"/>
        <end position="96"/>
    </location>
</feature>
<feature type="transmembrane region" description="Helical" evidence="1">
    <location>
        <begin position="121"/>
        <end position="141"/>
    </location>
</feature>
<feature type="transmembrane region" description="Helical" evidence="1">
    <location>
        <begin position="151"/>
        <end position="171"/>
    </location>
</feature>
<comment type="function">
    <text evidence="1">Plays a role in cell envelope biogenesis, maintenance of cell envelope integrity and membrane homeostasis.</text>
</comment>
<comment type="subcellular location">
    <subcellularLocation>
        <location evidence="1">Cell membrane</location>
        <topology evidence="1">Multi-pass membrane protein</topology>
    </subcellularLocation>
</comment>
<comment type="similarity">
    <text evidence="1">Belongs to the YciB family.</text>
</comment>
<gene>
    <name evidence="1" type="primary">yciB</name>
    <name type="ordered locus">bbp_255</name>
</gene>
<reference key="1">
    <citation type="journal article" date="2003" name="Proc. Natl. Acad. Sci. U.S.A.">
        <title>Reductive genome evolution in Buchnera aphidicola.</title>
        <authorList>
            <person name="van Ham R.C.H.J."/>
            <person name="Kamerbeek J."/>
            <person name="Palacios C."/>
            <person name="Rausell C."/>
            <person name="Abascal F."/>
            <person name="Bastolla U."/>
            <person name="Fernandez J.M."/>
            <person name="Jimenez L."/>
            <person name="Postigo M."/>
            <person name="Silva F.J."/>
            <person name="Tamames J."/>
            <person name="Viguera E."/>
            <person name="Latorre A."/>
            <person name="Valencia A."/>
            <person name="Moran F."/>
            <person name="Moya A."/>
        </authorList>
    </citation>
    <scope>NUCLEOTIDE SEQUENCE [LARGE SCALE GENOMIC DNA]</scope>
    <source>
        <strain>Bp</strain>
    </source>
</reference>